<protein>
    <recommendedName>
        <fullName evidence="1">Ribonuclease 3</fullName>
        <ecNumber evidence="1">3.1.26.3</ecNumber>
    </recommendedName>
    <alternativeName>
        <fullName evidence="1">Ribonuclease III</fullName>
        <shortName evidence="1">RNase III</shortName>
    </alternativeName>
</protein>
<proteinExistence type="inferred from homology"/>
<organism>
    <name type="scientific">Bordetella bronchiseptica (strain ATCC BAA-588 / NCTC 13252 / RB50)</name>
    <name type="common">Alcaligenes bronchisepticus</name>
    <dbReference type="NCBI Taxonomy" id="257310"/>
    <lineage>
        <taxon>Bacteria</taxon>
        <taxon>Pseudomonadati</taxon>
        <taxon>Pseudomonadota</taxon>
        <taxon>Betaproteobacteria</taxon>
        <taxon>Burkholderiales</taxon>
        <taxon>Alcaligenaceae</taxon>
        <taxon>Bordetella</taxon>
    </lineage>
</organism>
<keyword id="KW-0963">Cytoplasm</keyword>
<keyword id="KW-0255">Endonuclease</keyword>
<keyword id="KW-0378">Hydrolase</keyword>
<keyword id="KW-0460">Magnesium</keyword>
<keyword id="KW-0479">Metal-binding</keyword>
<keyword id="KW-0507">mRNA processing</keyword>
<keyword id="KW-0540">Nuclease</keyword>
<keyword id="KW-0694">RNA-binding</keyword>
<keyword id="KW-0698">rRNA processing</keyword>
<keyword id="KW-0699">rRNA-binding</keyword>
<keyword id="KW-0819">tRNA processing</keyword>
<evidence type="ECO:0000255" key="1">
    <source>
        <dbReference type="HAMAP-Rule" id="MF_00104"/>
    </source>
</evidence>
<feature type="chain" id="PRO_0000228505" description="Ribonuclease 3">
    <location>
        <begin position="1"/>
        <end position="256"/>
    </location>
</feature>
<feature type="domain" description="RNase III" evidence="1">
    <location>
        <begin position="6"/>
        <end position="128"/>
    </location>
</feature>
<feature type="domain" description="DRBM" evidence="1">
    <location>
        <begin position="155"/>
        <end position="225"/>
    </location>
</feature>
<feature type="active site" evidence="1">
    <location>
        <position position="45"/>
    </location>
</feature>
<feature type="active site" evidence="1">
    <location>
        <position position="117"/>
    </location>
</feature>
<feature type="binding site" evidence="1">
    <location>
        <position position="41"/>
    </location>
    <ligand>
        <name>Mg(2+)</name>
        <dbReference type="ChEBI" id="CHEBI:18420"/>
    </ligand>
</feature>
<feature type="binding site" evidence="1">
    <location>
        <position position="114"/>
    </location>
    <ligand>
        <name>Mg(2+)</name>
        <dbReference type="ChEBI" id="CHEBI:18420"/>
    </ligand>
</feature>
<feature type="binding site" evidence="1">
    <location>
        <position position="117"/>
    </location>
    <ligand>
        <name>Mg(2+)</name>
        <dbReference type="ChEBI" id="CHEBI:18420"/>
    </ligand>
</feature>
<reference key="1">
    <citation type="journal article" date="2003" name="Nat. Genet.">
        <title>Comparative analysis of the genome sequences of Bordetella pertussis, Bordetella parapertussis and Bordetella bronchiseptica.</title>
        <authorList>
            <person name="Parkhill J."/>
            <person name="Sebaihia M."/>
            <person name="Preston A."/>
            <person name="Murphy L.D."/>
            <person name="Thomson N.R."/>
            <person name="Harris D.E."/>
            <person name="Holden M.T.G."/>
            <person name="Churcher C.M."/>
            <person name="Bentley S.D."/>
            <person name="Mungall K.L."/>
            <person name="Cerdeno-Tarraga A.-M."/>
            <person name="Temple L."/>
            <person name="James K.D."/>
            <person name="Harris B."/>
            <person name="Quail M.A."/>
            <person name="Achtman M."/>
            <person name="Atkin R."/>
            <person name="Baker S."/>
            <person name="Basham D."/>
            <person name="Bason N."/>
            <person name="Cherevach I."/>
            <person name="Chillingworth T."/>
            <person name="Collins M."/>
            <person name="Cronin A."/>
            <person name="Davis P."/>
            <person name="Doggett J."/>
            <person name="Feltwell T."/>
            <person name="Goble A."/>
            <person name="Hamlin N."/>
            <person name="Hauser H."/>
            <person name="Holroyd S."/>
            <person name="Jagels K."/>
            <person name="Leather S."/>
            <person name="Moule S."/>
            <person name="Norberczak H."/>
            <person name="O'Neil S."/>
            <person name="Ormond D."/>
            <person name="Price C."/>
            <person name="Rabbinowitsch E."/>
            <person name="Rutter S."/>
            <person name="Sanders M."/>
            <person name="Saunders D."/>
            <person name="Seeger K."/>
            <person name="Sharp S."/>
            <person name="Simmonds M."/>
            <person name="Skelton J."/>
            <person name="Squares R."/>
            <person name="Squares S."/>
            <person name="Stevens K."/>
            <person name="Unwin L."/>
            <person name="Whitehead S."/>
            <person name="Barrell B.G."/>
            <person name="Maskell D.J."/>
        </authorList>
    </citation>
    <scope>NUCLEOTIDE SEQUENCE [LARGE SCALE GENOMIC DNA]</scope>
    <source>
        <strain>ATCC BAA-588 / NCTC 13252 / RB50</strain>
    </source>
</reference>
<dbReference type="EC" id="3.1.26.3" evidence="1"/>
<dbReference type="EMBL" id="BX640448">
    <property type="protein sequence ID" value="CAE35720.1"/>
    <property type="molecule type" value="Genomic_DNA"/>
</dbReference>
<dbReference type="SMR" id="Q7WD32"/>
<dbReference type="KEGG" id="bbr:BB3746"/>
<dbReference type="eggNOG" id="COG0571">
    <property type="taxonomic scope" value="Bacteria"/>
</dbReference>
<dbReference type="HOGENOM" id="CLU_000907_1_1_4"/>
<dbReference type="Proteomes" id="UP000001027">
    <property type="component" value="Chromosome"/>
</dbReference>
<dbReference type="GO" id="GO:0005737">
    <property type="term" value="C:cytoplasm"/>
    <property type="evidence" value="ECO:0007669"/>
    <property type="project" value="UniProtKB-SubCell"/>
</dbReference>
<dbReference type="GO" id="GO:0003725">
    <property type="term" value="F:double-stranded RNA binding"/>
    <property type="evidence" value="ECO:0007669"/>
    <property type="project" value="TreeGrafter"/>
</dbReference>
<dbReference type="GO" id="GO:0046872">
    <property type="term" value="F:metal ion binding"/>
    <property type="evidence" value="ECO:0007669"/>
    <property type="project" value="UniProtKB-KW"/>
</dbReference>
<dbReference type="GO" id="GO:0004525">
    <property type="term" value="F:ribonuclease III activity"/>
    <property type="evidence" value="ECO:0007669"/>
    <property type="project" value="UniProtKB-UniRule"/>
</dbReference>
<dbReference type="GO" id="GO:0019843">
    <property type="term" value="F:rRNA binding"/>
    <property type="evidence" value="ECO:0007669"/>
    <property type="project" value="UniProtKB-KW"/>
</dbReference>
<dbReference type="GO" id="GO:0006397">
    <property type="term" value="P:mRNA processing"/>
    <property type="evidence" value="ECO:0007669"/>
    <property type="project" value="UniProtKB-UniRule"/>
</dbReference>
<dbReference type="GO" id="GO:0010468">
    <property type="term" value="P:regulation of gene expression"/>
    <property type="evidence" value="ECO:0007669"/>
    <property type="project" value="TreeGrafter"/>
</dbReference>
<dbReference type="GO" id="GO:0006364">
    <property type="term" value="P:rRNA processing"/>
    <property type="evidence" value="ECO:0007669"/>
    <property type="project" value="UniProtKB-UniRule"/>
</dbReference>
<dbReference type="GO" id="GO:0008033">
    <property type="term" value="P:tRNA processing"/>
    <property type="evidence" value="ECO:0007669"/>
    <property type="project" value="UniProtKB-KW"/>
</dbReference>
<dbReference type="CDD" id="cd10845">
    <property type="entry name" value="DSRM_RNAse_III_family"/>
    <property type="match status" value="1"/>
</dbReference>
<dbReference type="CDD" id="cd00593">
    <property type="entry name" value="RIBOc"/>
    <property type="match status" value="1"/>
</dbReference>
<dbReference type="FunFam" id="1.10.1520.10:FF:000001">
    <property type="entry name" value="Ribonuclease 3"/>
    <property type="match status" value="1"/>
</dbReference>
<dbReference type="Gene3D" id="3.30.160.20">
    <property type="match status" value="1"/>
</dbReference>
<dbReference type="Gene3D" id="1.10.1520.10">
    <property type="entry name" value="Ribonuclease III domain"/>
    <property type="match status" value="1"/>
</dbReference>
<dbReference type="HAMAP" id="MF_00104">
    <property type="entry name" value="RNase_III"/>
    <property type="match status" value="1"/>
</dbReference>
<dbReference type="InterPro" id="IPR014720">
    <property type="entry name" value="dsRBD_dom"/>
</dbReference>
<dbReference type="InterPro" id="IPR011907">
    <property type="entry name" value="RNase_III"/>
</dbReference>
<dbReference type="InterPro" id="IPR000999">
    <property type="entry name" value="RNase_III_dom"/>
</dbReference>
<dbReference type="InterPro" id="IPR036389">
    <property type="entry name" value="RNase_III_sf"/>
</dbReference>
<dbReference type="NCBIfam" id="TIGR02191">
    <property type="entry name" value="RNaseIII"/>
    <property type="match status" value="1"/>
</dbReference>
<dbReference type="PANTHER" id="PTHR11207:SF0">
    <property type="entry name" value="RIBONUCLEASE 3"/>
    <property type="match status" value="1"/>
</dbReference>
<dbReference type="PANTHER" id="PTHR11207">
    <property type="entry name" value="RIBONUCLEASE III"/>
    <property type="match status" value="1"/>
</dbReference>
<dbReference type="Pfam" id="PF00035">
    <property type="entry name" value="dsrm"/>
    <property type="match status" value="1"/>
</dbReference>
<dbReference type="Pfam" id="PF14622">
    <property type="entry name" value="Ribonucleas_3_3"/>
    <property type="match status" value="1"/>
</dbReference>
<dbReference type="SMART" id="SM00358">
    <property type="entry name" value="DSRM"/>
    <property type="match status" value="1"/>
</dbReference>
<dbReference type="SMART" id="SM00535">
    <property type="entry name" value="RIBOc"/>
    <property type="match status" value="1"/>
</dbReference>
<dbReference type="SUPFAM" id="SSF54768">
    <property type="entry name" value="dsRNA-binding domain-like"/>
    <property type="match status" value="1"/>
</dbReference>
<dbReference type="SUPFAM" id="SSF69065">
    <property type="entry name" value="RNase III domain-like"/>
    <property type="match status" value="1"/>
</dbReference>
<dbReference type="PROSITE" id="PS50137">
    <property type="entry name" value="DS_RBD"/>
    <property type="match status" value="1"/>
</dbReference>
<dbReference type="PROSITE" id="PS00517">
    <property type="entry name" value="RNASE_3_1"/>
    <property type="match status" value="1"/>
</dbReference>
<dbReference type="PROSITE" id="PS50142">
    <property type="entry name" value="RNASE_3_2"/>
    <property type="match status" value="1"/>
</dbReference>
<gene>
    <name evidence="1" type="primary">rnc</name>
    <name type="ordered locus">BB3746</name>
</gene>
<name>RNC_BORBR</name>
<comment type="function">
    <text evidence="1">Digests double-stranded RNA. Involved in the processing of primary rRNA transcript to yield the immediate precursors to the large and small rRNAs (23S and 16S). Processes some mRNAs, and tRNAs when they are encoded in the rRNA operon. Processes pre-crRNA and tracrRNA of type II CRISPR loci if present in the organism.</text>
</comment>
<comment type="catalytic activity">
    <reaction evidence="1">
        <text>Endonucleolytic cleavage to 5'-phosphomonoester.</text>
        <dbReference type="EC" id="3.1.26.3"/>
    </reaction>
</comment>
<comment type="cofactor">
    <cofactor evidence="1">
        <name>Mg(2+)</name>
        <dbReference type="ChEBI" id="CHEBI:18420"/>
    </cofactor>
</comment>
<comment type="subunit">
    <text evidence="1">Homodimer.</text>
</comment>
<comment type="subcellular location">
    <subcellularLocation>
        <location evidence="1">Cytoplasm</location>
    </subcellularLocation>
</comment>
<comment type="similarity">
    <text evidence="1">Belongs to the ribonuclease III family.</text>
</comment>
<sequence>MTAMSLATLETRLDHRFGDKALLEQALTHRSHGARHNERLEFLGDSVLNFVVAAMLFERYGKLDEGDLSRLRANLVKQASLADIAQRLDLSQYLRLGEGELKSGGFRRPSILADTVEALFGAVFLDAGFEAARRVIVRQYQPVMAHVDPKTLGKDAKTLLQEFLQGRKLALPQYTVVATHGAAHSQQFEVECAIPALEIKIVAPGASRRAAEQSAAKVALEAAQAVLPAARAARKSGKARKTAQLSLPVAVAQEVK</sequence>
<accession>Q7WD32</accession>